<name>YCX6_CHLRE</name>
<comment type="subcellular location">
    <subcellularLocation>
        <location>Plastid</location>
        <location>Chloroplast</location>
    </subcellularLocation>
</comment>
<sequence length="112" mass="12346">MTLALMQSMGKLKFLHCLLPLPFRDVPFPLRASKLRDFNAINKFVPLRDVSGSCEVLILYINIECLHTPKEDVSGSGTATAILILRRSSGGPTATKIYLPEDVLPTAEANEF</sequence>
<accession>P36443</accession>
<geneLocation type="chloroplast"/>
<proteinExistence type="predicted"/>
<organism>
    <name type="scientific">Chlamydomonas reinhardtii</name>
    <name type="common">Chlamydomonas smithii</name>
    <dbReference type="NCBI Taxonomy" id="3055"/>
    <lineage>
        <taxon>Eukaryota</taxon>
        <taxon>Viridiplantae</taxon>
        <taxon>Chlorophyta</taxon>
        <taxon>core chlorophytes</taxon>
        <taxon>Chlorophyceae</taxon>
        <taxon>CS clade</taxon>
        <taxon>Chlamydomonadales</taxon>
        <taxon>Chlamydomonadaceae</taxon>
        <taxon>Chlamydomonas</taxon>
    </lineage>
</organism>
<dbReference type="EMBL" id="X78133">
    <property type="protein sequence ID" value="CAA55012.1"/>
    <property type="molecule type" value="Genomic_DNA"/>
</dbReference>
<dbReference type="EMBL" id="FJ423446">
    <property type="status" value="NOT_ANNOTATED_CDS"/>
    <property type="molecule type" value="Genomic_DNA"/>
</dbReference>
<dbReference type="EMBL" id="BK000554">
    <property type="status" value="NOT_ANNOTATED_CDS"/>
    <property type="molecule type" value="Genomic_DNA"/>
</dbReference>
<dbReference type="PIR" id="S42478">
    <property type="entry name" value="S42478"/>
</dbReference>
<dbReference type="InParanoid" id="P36443"/>
<dbReference type="Proteomes" id="UP000006906">
    <property type="component" value="Chloroplast"/>
</dbReference>
<dbReference type="GO" id="GO:0009507">
    <property type="term" value="C:chloroplast"/>
    <property type="evidence" value="ECO:0007669"/>
    <property type="project" value="UniProtKB-SubCell"/>
</dbReference>
<protein>
    <recommendedName>
        <fullName>Uncharacterized 12.3 kDa protein in petA-petD intergenic region</fullName>
    </recommendedName>
    <alternativeName>
        <fullName>ORF102</fullName>
    </alternativeName>
</protein>
<feature type="chain" id="PRO_0000217501" description="Uncharacterized 12.3 kDa protein in petA-petD intergenic region">
    <location>
        <begin position="1"/>
        <end position="112"/>
    </location>
</feature>
<reference key="1">
    <citation type="submission" date="1994-03" db="EMBL/GenBank/DDBJ databases">
        <authorList>
            <person name="Buschlen S."/>
        </authorList>
    </citation>
    <scope>NUCLEOTIDE SEQUENCE [GENOMIC DNA]</scope>
    <source>
        <strain>137c / CC-125</strain>
    </source>
</reference>
<reference key="2">
    <citation type="journal article" date="2009" name="BMC Evol. Biol.">
        <title>Nucleotide diversity of the Chlamydomonas reinhardtii plastid genome: addressing the mutational-hazard hypothesis.</title>
        <authorList>
            <person name="Smith D.R."/>
            <person name="Lee R.W."/>
        </authorList>
    </citation>
    <scope>NUCLEOTIDE SEQUENCE [LARGE SCALE GENOMIC DNA]</scope>
    <source>
        <strain>CC-503</strain>
    </source>
</reference>
<reference key="3">
    <citation type="journal article" date="2002" name="Plant Cell">
        <title>The Chlamydomonas reinhardtii plastid chromosome: islands of genes in a sea of repeats.</title>
        <authorList>
            <person name="Maul J.E."/>
            <person name="Lilly J.W."/>
            <person name="Cui L."/>
            <person name="dePamphilis C.W."/>
            <person name="Miller W."/>
            <person name="Harris E.H."/>
            <person name="Stern D.B."/>
        </authorList>
    </citation>
    <scope>IDENTIFICATION</scope>
    <scope>COMPLETE PLASTID GENOME</scope>
</reference>
<keyword id="KW-0150">Chloroplast</keyword>
<keyword id="KW-0934">Plastid</keyword>
<keyword id="KW-1185">Reference proteome</keyword>